<accession>P84390</accession>
<accession>Q6S6W2</accession>
<proteinExistence type="inferred from homology"/>
<organismHost>
    <name type="scientific">Equus caballus</name>
    <name type="common">Horse</name>
    <dbReference type="NCBI Taxonomy" id="9796"/>
</organismHost>
<protein>
    <recommendedName>
        <fullName>Serine/threonine-protein kinase US3 homolog</fullName>
        <ecNumber>2.7.11.1</ecNumber>
    </recommendedName>
</protein>
<reference evidence="6 7" key="1">
    <citation type="submission" date="2003-11" db="EMBL/GenBank/DDBJ databases">
        <authorList>
            <person name="Davis-Poynter N."/>
            <person name="Nugent J."/>
            <person name="Birch-Machin I."/>
            <person name="Allen G.P."/>
        </authorList>
    </citation>
    <scope>NUCLEOTIDE SEQUENCE [LARGE SCALE GENOMIC DNA]</scope>
</reference>
<keyword id="KW-0067">ATP-binding</keyword>
<keyword id="KW-1035">Host cytoplasm</keyword>
<keyword id="KW-1048">Host nucleus</keyword>
<keyword id="KW-0945">Host-virus interaction</keyword>
<keyword id="KW-0418">Kinase</keyword>
<keyword id="KW-1119">Modulation of host cell apoptosis by virus</keyword>
<keyword id="KW-1122">Modulation of host chromatin by virus</keyword>
<keyword id="KW-0547">Nucleotide-binding</keyword>
<keyword id="KW-0723">Serine/threonine-protein kinase</keyword>
<keyword id="KW-0808">Transferase</keyword>
<sequence length="382" mass="42543">MENKQCDHLTDWFSTTSDASESMDTTPPLPPPTPSVDPSYSGAAADEDLYSDISEGDLEYSDCDSASESDEDDDDCLIPSKEKAREVAASFGYTVIKTLTPGSEGRVMVATKDGQPEPVVLKIGQKGTTLIEAMMLRNVNHPSVIQMKDTLVSGAITCMVLPHYSSDLYTFLTKESRRIPIDQALIIEKQILEGLRYLHAQRIIHRDVKTENIFINSVDQVCIADFGAAQFPVVEPADLGLAGTVETNAPEVLARAKYNSKADIWSAGIVLFEMLAYPSTLFEDPPSTPEEYVKSCHSQLLKIISTLKINPEEFPRDPGSRLVRGYIEYSRLERKPYTRYPCFQRVNLHIDGEFLVHKMLAFNAAMRPSAEELLSYPMFAQL</sequence>
<name>US03_EHV1V</name>
<organism>
    <name type="scientific">Equine herpesvirus 1 (strain V592)</name>
    <name type="common">EHV-1</name>
    <name type="synonym">Equine abortion virus</name>
    <dbReference type="NCBI Taxonomy" id="310273"/>
    <lineage>
        <taxon>Viruses</taxon>
        <taxon>Duplodnaviria</taxon>
        <taxon>Heunggongvirae</taxon>
        <taxon>Peploviricota</taxon>
        <taxon>Herviviricetes</taxon>
        <taxon>Herpesvirales</taxon>
        <taxon>Orthoherpesviridae</taxon>
        <taxon>Alphaherpesvirinae</taxon>
        <taxon>Varicellovirus</taxon>
        <taxon>Varicellovirus equidalpha1</taxon>
        <taxon>Equid alphaherpesvirus 1</taxon>
    </lineage>
</organism>
<dbReference type="EC" id="2.7.11.1"/>
<dbReference type="EMBL" id="AY464052">
    <property type="protein sequence ID" value="AAS45957.1"/>
    <property type="molecule type" value="Genomic_DNA"/>
</dbReference>
<dbReference type="SMR" id="P84390"/>
<dbReference type="KEGG" id="vg:2948581"/>
<dbReference type="Proteomes" id="UP000008296">
    <property type="component" value="Segment"/>
</dbReference>
<dbReference type="GO" id="GO:0030430">
    <property type="term" value="C:host cell cytoplasm"/>
    <property type="evidence" value="ECO:0007669"/>
    <property type="project" value="UniProtKB-SubCell"/>
</dbReference>
<dbReference type="GO" id="GO:0042025">
    <property type="term" value="C:host cell nucleus"/>
    <property type="evidence" value="ECO:0007669"/>
    <property type="project" value="UniProtKB-SubCell"/>
</dbReference>
<dbReference type="GO" id="GO:0005524">
    <property type="term" value="F:ATP binding"/>
    <property type="evidence" value="ECO:0007669"/>
    <property type="project" value="UniProtKB-KW"/>
</dbReference>
<dbReference type="GO" id="GO:0106310">
    <property type="term" value="F:protein serine kinase activity"/>
    <property type="evidence" value="ECO:0007669"/>
    <property type="project" value="RHEA"/>
</dbReference>
<dbReference type="GO" id="GO:0004674">
    <property type="term" value="F:protein serine/threonine kinase activity"/>
    <property type="evidence" value="ECO:0007669"/>
    <property type="project" value="UniProtKB-KW"/>
</dbReference>
<dbReference type="GO" id="GO:0052150">
    <property type="term" value="P:symbiont-mediated perturbation of host apoptosis"/>
    <property type="evidence" value="ECO:0007669"/>
    <property type="project" value="UniProtKB-KW"/>
</dbReference>
<dbReference type="GO" id="GO:0039525">
    <property type="term" value="P:symbiont-mediated perturbation of host chromatin organization"/>
    <property type="evidence" value="ECO:0007669"/>
    <property type="project" value="UniProtKB-KW"/>
</dbReference>
<dbReference type="CDD" id="cd00180">
    <property type="entry name" value="PKc"/>
    <property type="match status" value="1"/>
</dbReference>
<dbReference type="Gene3D" id="3.30.200.20">
    <property type="entry name" value="Phosphorylase Kinase, domain 1"/>
    <property type="match status" value="1"/>
</dbReference>
<dbReference type="Gene3D" id="1.10.510.10">
    <property type="entry name" value="Transferase(Phosphotransferase) domain 1"/>
    <property type="match status" value="1"/>
</dbReference>
<dbReference type="InterPro" id="IPR011009">
    <property type="entry name" value="Kinase-like_dom_sf"/>
</dbReference>
<dbReference type="InterPro" id="IPR050660">
    <property type="entry name" value="NEK_Ser/Thr_kinase"/>
</dbReference>
<dbReference type="InterPro" id="IPR000719">
    <property type="entry name" value="Prot_kinase_dom"/>
</dbReference>
<dbReference type="InterPro" id="IPR008271">
    <property type="entry name" value="Ser/Thr_kinase_AS"/>
</dbReference>
<dbReference type="PANTHER" id="PTHR43671">
    <property type="entry name" value="SERINE/THREONINE-PROTEIN KINASE NEK"/>
    <property type="match status" value="1"/>
</dbReference>
<dbReference type="PANTHER" id="PTHR43671:SF98">
    <property type="entry name" value="SERINE_THREONINE-PROTEIN KINASE NEK11"/>
    <property type="match status" value="1"/>
</dbReference>
<dbReference type="Pfam" id="PF00069">
    <property type="entry name" value="Pkinase"/>
    <property type="match status" value="1"/>
</dbReference>
<dbReference type="SMART" id="SM00220">
    <property type="entry name" value="S_TKc"/>
    <property type="match status" value="1"/>
</dbReference>
<dbReference type="SUPFAM" id="SSF56112">
    <property type="entry name" value="Protein kinase-like (PK-like)"/>
    <property type="match status" value="1"/>
</dbReference>
<dbReference type="PROSITE" id="PS50011">
    <property type="entry name" value="PROTEIN_KINASE_DOM"/>
    <property type="match status" value="1"/>
</dbReference>
<dbReference type="PROSITE" id="PS00108">
    <property type="entry name" value="PROTEIN_KINASE_ST"/>
    <property type="match status" value="1"/>
</dbReference>
<gene>
    <name type="ordered locus">69</name>
</gene>
<comment type="function">
    <text evidence="1">Multifunctional serine/threonine kinase that plays a role in several processes including egress of virus particles from the nucleus, modulation of the actin cytoskeleton and inhibition of apoptosis. Phosphorylates UL31 and UL34, two critical regulators of capsid budding from nucleus to endoplasmic reticulum, thereby facilitating virion egress. Modulates and redistributes host components of the nuclear envelope, including LMNA, emerin/EMD and the nuclear matrix protein MATR3. Phosphorylates envelope glycoprotein B (gB), probably to direct it to the cell surface. Promotes virus intracellular spread by restructuring host cell cytoskeleton. Blocks host apoptosis to extend cell survival and allow efficient viral replication. Promotes viral gene expression by phosphorylating host HDAC2 to reduce viral genome silencing (By similarity).</text>
</comment>
<comment type="catalytic activity">
    <reaction evidence="2">
        <text>L-seryl-[protein] + ATP = O-phospho-L-seryl-[protein] + ADP + H(+)</text>
        <dbReference type="Rhea" id="RHEA:17989"/>
        <dbReference type="Rhea" id="RHEA-COMP:9863"/>
        <dbReference type="Rhea" id="RHEA-COMP:11604"/>
        <dbReference type="ChEBI" id="CHEBI:15378"/>
        <dbReference type="ChEBI" id="CHEBI:29999"/>
        <dbReference type="ChEBI" id="CHEBI:30616"/>
        <dbReference type="ChEBI" id="CHEBI:83421"/>
        <dbReference type="ChEBI" id="CHEBI:456216"/>
        <dbReference type="EC" id="2.7.11.1"/>
    </reaction>
</comment>
<comment type="catalytic activity">
    <reaction evidence="2">
        <text>L-threonyl-[protein] + ATP = O-phospho-L-threonyl-[protein] + ADP + H(+)</text>
        <dbReference type="Rhea" id="RHEA:46608"/>
        <dbReference type="Rhea" id="RHEA-COMP:11060"/>
        <dbReference type="Rhea" id="RHEA-COMP:11605"/>
        <dbReference type="ChEBI" id="CHEBI:15378"/>
        <dbReference type="ChEBI" id="CHEBI:30013"/>
        <dbReference type="ChEBI" id="CHEBI:30616"/>
        <dbReference type="ChEBI" id="CHEBI:61977"/>
        <dbReference type="ChEBI" id="CHEBI:456216"/>
        <dbReference type="EC" id="2.7.11.1"/>
    </reaction>
</comment>
<comment type="subcellular location">
    <subcellularLocation>
        <location evidence="1">Host cytoplasm</location>
    </subcellularLocation>
    <subcellularLocation>
        <location evidence="1">Host nucleus</location>
    </subcellularLocation>
</comment>
<comment type="PTM">
    <text evidence="1">Phosphorylated by protein 49; this phosphorylation regulates subsequent phosphorylation of proteins 27 and 29 by US3 homolog. Autophosphorylated (By similarity).</text>
</comment>
<comment type="similarity">
    <text evidence="3">Belongs to the protein kinase superfamily. Ser/Thr protein kinase family.</text>
</comment>
<feature type="chain" id="PRO_0000086179" description="Serine/threonine-protein kinase US3 homolog">
    <location>
        <begin position="1"/>
        <end position="382"/>
    </location>
</feature>
<feature type="domain" description="Protein kinase" evidence="3">
    <location>
        <begin position="93"/>
        <end position="379"/>
    </location>
</feature>
<feature type="region of interest" description="Disordered" evidence="5">
    <location>
        <begin position="1"/>
        <end position="75"/>
    </location>
</feature>
<feature type="compositionally biased region" description="Basic and acidic residues" evidence="5">
    <location>
        <begin position="1"/>
        <end position="10"/>
    </location>
</feature>
<feature type="compositionally biased region" description="Polar residues" evidence="5">
    <location>
        <begin position="12"/>
        <end position="24"/>
    </location>
</feature>
<feature type="compositionally biased region" description="Acidic residues" evidence="5">
    <location>
        <begin position="45"/>
        <end position="75"/>
    </location>
</feature>
<feature type="active site" description="Proton acceptor" evidence="2 3 4">
    <location>
        <position position="207"/>
    </location>
</feature>
<feature type="binding site" evidence="2 3">
    <location>
        <begin position="99"/>
        <end position="107"/>
    </location>
    <ligand>
        <name>ATP</name>
        <dbReference type="ChEBI" id="CHEBI:30616"/>
    </ligand>
</feature>
<feature type="binding site" evidence="2 3">
    <location>
        <position position="122"/>
    </location>
    <ligand>
        <name>ATP</name>
        <dbReference type="ChEBI" id="CHEBI:30616"/>
    </ligand>
</feature>
<evidence type="ECO:0000250" key="1"/>
<evidence type="ECO:0000250" key="2">
    <source>
        <dbReference type="UniProtKB" id="P28926"/>
    </source>
</evidence>
<evidence type="ECO:0000255" key="3">
    <source>
        <dbReference type="PROSITE-ProRule" id="PRU00159"/>
    </source>
</evidence>
<evidence type="ECO:0000255" key="4">
    <source>
        <dbReference type="PROSITE-ProRule" id="PRU10027"/>
    </source>
</evidence>
<evidence type="ECO:0000256" key="5">
    <source>
        <dbReference type="SAM" id="MobiDB-lite"/>
    </source>
</evidence>
<evidence type="ECO:0000305" key="6"/>
<evidence type="ECO:0000312" key="7">
    <source>
        <dbReference type="EMBL" id="AAS45957.1"/>
    </source>
</evidence>